<organism>
    <name type="scientific">Streptomyces niveus</name>
    <name type="common">Streptomyces spheroides</name>
    <dbReference type="NCBI Taxonomy" id="193462"/>
    <lineage>
        <taxon>Bacteria</taxon>
        <taxon>Bacillati</taxon>
        <taxon>Actinomycetota</taxon>
        <taxon>Actinomycetes</taxon>
        <taxon>Kitasatosporales</taxon>
        <taxon>Streptomycetaceae</taxon>
        <taxon>Streptomyces</taxon>
    </lineage>
</organism>
<keyword id="KW-0326">Glycosidase</keyword>
<keyword id="KW-0378">Hydrolase</keyword>
<keyword id="KW-0520">NAD</keyword>
<keyword id="KW-0732">Signal</keyword>
<protein>
    <recommendedName>
        <fullName>Glycosyl hydrolase family 109 protein</fullName>
        <ecNumber>3.2.1.-</ecNumber>
    </recommendedName>
</protein>
<dbReference type="EC" id="3.2.1.-"/>
<dbReference type="EMBL" id="AY227005">
    <property type="protein sequence ID" value="AAP48602.1"/>
    <property type="molecule type" value="Genomic_DNA"/>
</dbReference>
<dbReference type="SMR" id="Q50HM6"/>
<dbReference type="CAZy" id="GH109">
    <property type="family name" value="Glycoside Hydrolase Family 109"/>
</dbReference>
<dbReference type="GO" id="GO:0016798">
    <property type="term" value="F:hydrolase activity, acting on glycosyl bonds"/>
    <property type="evidence" value="ECO:0007669"/>
    <property type="project" value="UniProtKB-KW"/>
</dbReference>
<dbReference type="GO" id="GO:0000166">
    <property type="term" value="F:nucleotide binding"/>
    <property type="evidence" value="ECO:0007669"/>
    <property type="project" value="InterPro"/>
</dbReference>
<dbReference type="Gene3D" id="3.30.360.10">
    <property type="entry name" value="Dihydrodipicolinate Reductase, domain 2"/>
    <property type="match status" value="1"/>
</dbReference>
<dbReference type="Gene3D" id="3.40.50.720">
    <property type="entry name" value="NAD(P)-binding Rossmann-like Domain"/>
    <property type="match status" value="1"/>
</dbReference>
<dbReference type="InterPro" id="IPR000683">
    <property type="entry name" value="Gfo/Idh/MocA-like_OxRdtase_N"/>
</dbReference>
<dbReference type="InterPro" id="IPR050463">
    <property type="entry name" value="Gfo/Idh/MocA_oxidrdct_glycsds"/>
</dbReference>
<dbReference type="InterPro" id="IPR049303">
    <property type="entry name" value="Glyco_hydro_109_C"/>
</dbReference>
<dbReference type="InterPro" id="IPR036291">
    <property type="entry name" value="NAD(P)-bd_dom_sf"/>
</dbReference>
<dbReference type="InterPro" id="IPR006311">
    <property type="entry name" value="TAT_signal"/>
</dbReference>
<dbReference type="PANTHER" id="PTHR43818">
    <property type="entry name" value="BCDNA.GH03377"/>
    <property type="match status" value="1"/>
</dbReference>
<dbReference type="PANTHER" id="PTHR43818:SF1">
    <property type="entry name" value="GLYCOSYL HYDROLASE FAMILY 109 PROTEIN"/>
    <property type="match status" value="1"/>
</dbReference>
<dbReference type="Pfam" id="PF01408">
    <property type="entry name" value="GFO_IDH_MocA"/>
    <property type="match status" value="1"/>
</dbReference>
<dbReference type="Pfam" id="PF21252">
    <property type="entry name" value="Glyco_hydro_109_C"/>
    <property type="match status" value="1"/>
</dbReference>
<dbReference type="SUPFAM" id="SSF51735">
    <property type="entry name" value="NAD(P)-binding Rossmann-fold domains"/>
    <property type="match status" value="1"/>
</dbReference>
<dbReference type="PROSITE" id="PS51318">
    <property type="entry name" value="TAT"/>
    <property type="match status" value="1"/>
</dbReference>
<feature type="signal peptide" description="Tat-type signal" evidence="2">
    <location>
        <begin position="1"/>
        <end position="55"/>
    </location>
</feature>
<feature type="chain" id="PRO_0000348568" description="Glycosyl hydrolase family 109 protein">
    <location>
        <begin position="56"/>
        <end position="494"/>
    </location>
</feature>
<feature type="region of interest" description="Disordered" evidence="3">
    <location>
        <begin position="1"/>
        <end position="35"/>
    </location>
</feature>
<feature type="region of interest" description="Disordered" evidence="3">
    <location>
        <begin position="59"/>
        <end position="86"/>
    </location>
</feature>
<feature type="region of interest" description="Disordered" evidence="3">
    <location>
        <begin position="463"/>
        <end position="494"/>
    </location>
</feature>
<feature type="compositionally biased region" description="Basic and acidic residues" evidence="3">
    <location>
        <begin position="12"/>
        <end position="22"/>
    </location>
</feature>
<feature type="compositionally biased region" description="Basic and acidic residues" evidence="3">
    <location>
        <begin position="475"/>
        <end position="494"/>
    </location>
</feature>
<feature type="binding site" evidence="1">
    <location>
        <begin position="103"/>
        <end position="104"/>
    </location>
    <ligand>
        <name>NAD(+)</name>
        <dbReference type="ChEBI" id="CHEBI:57540"/>
    </ligand>
</feature>
<feature type="binding site" evidence="1">
    <location>
        <position position="125"/>
    </location>
    <ligand>
        <name>NAD(+)</name>
        <dbReference type="ChEBI" id="CHEBI:57540"/>
    </ligand>
</feature>
<feature type="binding site" evidence="1">
    <location>
        <begin position="174"/>
        <end position="177"/>
    </location>
    <ligand>
        <name>NAD(+)</name>
        <dbReference type="ChEBI" id="CHEBI:57540"/>
    </ligand>
</feature>
<feature type="binding site" evidence="1">
    <location>
        <begin position="194"/>
        <end position="195"/>
    </location>
    <ligand>
        <name>NAD(+)</name>
        <dbReference type="ChEBI" id="CHEBI:57540"/>
    </ligand>
</feature>
<feature type="binding site" evidence="1">
    <location>
        <position position="223"/>
    </location>
    <ligand>
        <name>NAD(+)</name>
        <dbReference type="ChEBI" id="CHEBI:57540"/>
    </ligand>
</feature>
<feature type="binding site" evidence="1">
    <location>
        <position position="252"/>
    </location>
    <ligand>
        <name>substrate</name>
    </ligand>
</feature>
<feature type="binding site" evidence="1">
    <location>
        <position position="271"/>
    </location>
    <ligand>
        <name>substrate</name>
    </ligand>
</feature>
<feature type="binding site" evidence="1">
    <location>
        <begin position="283"/>
        <end position="286"/>
    </location>
    <ligand>
        <name>substrate</name>
    </ligand>
</feature>
<feature type="binding site" evidence="1">
    <location>
        <position position="283"/>
    </location>
    <ligand>
        <name>NAD(+)</name>
        <dbReference type="ChEBI" id="CHEBI:57540"/>
    </ligand>
</feature>
<feature type="binding site" evidence="1">
    <location>
        <position position="365"/>
    </location>
    <ligand>
        <name>substrate</name>
    </ligand>
</feature>
<proteinExistence type="inferred from homology"/>
<accession>Q50HM6</accession>
<name>GH109_STRNV</name>
<sequence>MNDAAPQNPGQDEAKGTGEKDNGGSMSPRSALRTTAGVAGAGLGLSALGTGTASASVPEAAQTAVPAAESDESAAPKRQGRTMAGVPFERRSTVRVGIIGLGNRGGSMIDLFLAVPGVRVVALCDTVRDKAASAAAKVVKAGQPAPAVYTKDEHDYEQLCARGDVDFVYVATPWDFHFEMAKTAMLNGKHVGVECPVAMRLDELWKLVDLSERTRRHCMQLENCAYGKNEMRVLRMAHAGLFGDLLHGAGAYNHDLRGLMFDPDYYEGPWRRLWHTRLRGDLYPNHGFGPVANYLDINRGDRAVSITSMGTPALGLAQYREENMPPGDASWKETYVSSDRTISLVQTAKGRVVRLEHDVSTPHPYSRINSLGGTRGVFEDYPERIYIEPDHANDEWGDFAAYADWDHWLWKEHANPPGGHGGMDYIMVFRLMQCVRLGLVPDFDVYDAATWTAPVPLSHASIKANGKPQQIPDFTRGEWKKSRPGTDSEKPSEP</sequence>
<comment type="function">
    <text evidence="1">Glycosidase.</text>
</comment>
<comment type="cofactor">
    <cofactor evidence="1">
        <name>NAD(+)</name>
        <dbReference type="ChEBI" id="CHEBI:57540"/>
    </cofactor>
    <text evidence="1">Binds 1 NAD(+) per subunit. The NAD(+) cannot dissociate.</text>
</comment>
<comment type="PTM">
    <text>Predicted to be exported by the Tat system. The position of the signal peptide cleavage has not been experimentally proven.</text>
</comment>
<comment type="similarity">
    <text evidence="4">Belongs to the Gfo/Idh/MocA family. Glycosyl hydrolase 109 subfamily.</text>
</comment>
<reference key="1">
    <citation type="journal article" date="2005" name="Appl. Environ. Microbiol.">
        <title>Heterologous expression of novobiocin and clorobiocin biosynthetic gene clusters.</title>
        <authorList>
            <person name="Eustaquio A.S."/>
            <person name="Gust B."/>
            <person name="Galm U."/>
            <person name="Li S.M."/>
            <person name="Chater K.F."/>
            <person name="Heide L."/>
        </authorList>
    </citation>
    <scope>NUCLEOTIDE SEQUENCE [GENOMIC DNA]</scope>
    <source>
        <strain>ATCC 23965 / DSM 40292 / JCM 4252 / NBRC 12917 / NCIMB 11891 / NRRL 2449</strain>
    </source>
</reference>
<evidence type="ECO:0000250" key="1"/>
<evidence type="ECO:0000255" key="2">
    <source>
        <dbReference type="PROSITE-ProRule" id="PRU00648"/>
    </source>
</evidence>
<evidence type="ECO:0000256" key="3">
    <source>
        <dbReference type="SAM" id="MobiDB-lite"/>
    </source>
</evidence>
<evidence type="ECO:0000305" key="4"/>